<protein>
    <recommendedName>
        <fullName>Uncharacterized lipoprotein YceB</fullName>
    </recommendedName>
</protein>
<reference key="1">
    <citation type="journal article" date="2001" name="Nature">
        <title>Complete genome sequence of Salmonella enterica serovar Typhimurium LT2.</title>
        <authorList>
            <person name="McClelland M."/>
            <person name="Sanderson K.E."/>
            <person name="Spieth J."/>
            <person name="Clifton S.W."/>
            <person name="Latreille P."/>
            <person name="Courtney L."/>
            <person name="Porwollik S."/>
            <person name="Ali J."/>
            <person name="Dante M."/>
            <person name="Du F."/>
            <person name="Hou S."/>
            <person name="Layman D."/>
            <person name="Leonard S."/>
            <person name="Nguyen C."/>
            <person name="Scott K."/>
            <person name="Holmes A."/>
            <person name="Grewal N."/>
            <person name="Mulvaney E."/>
            <person name="Ryan E."/>
            <person name="Sun H."/>
            <person name="Florea L."/>
            <person name="Miller W."/>
            <person name="Stoneking T."/>
            <person name="Nhan M."/>
            <person name="Waterston R."/>
            <person name="Wilson R.K."/>
        </authorList>
    </citation>
    <scope>NUCLEOTIDE SEQUENCE [LARGE SCALE GENOMIC DNA]</scope>
    <source>
        <strain>LT2 / SGSC1412 / ATCC 700720</strain>
    </source>
</reference>
<reference key="2">
    <citation type="journal article" date="1986" name="Eur. J. Biochem.">
        <title>Cloning and structural characterization of the Salmonella typhimurium pyrC gene encoding dihydroorotase.</title>
        <authorList>
            <person name="Neuhrd J."/>
            <person name="Kelln R.A."/>
            <person name="Stauning E."/>
        </authorList>
    </citation>
    <scope>NUCLEOTIDE SEQUENCE [GENOMIC DNA] OF 84-186</scope>
    <source>
        <strain>LT2</strain>
    </source>
</reference>
<accession>P40822</accession>
<evidence type="ECO:0000255" key="1">
    <source>
        <dbReference type="PROSITE-ProRule" id="PRU00303"/>
    </source>
</evidence>
<dbReference type="EMBL" id="AE006468">
    <property type="protein sequence ID" value="AAL20094.1"/>
    <property type="molecule type" value="Genomic_DNA"/>
</dbReference>
<dbReference type="EMBL" id="X03928">
    <property type="protein sequence ID" value="CAA27566.1"/>
    <property type="molecule type" value="Genomic_DNA"/>
</dbReference>
<dbReference type="RefSeq" id="NP_460135.1">
    <property type="nucleotide sequence ID" value="NC_003197.2"/>
</dbReference>
<dbReference type="RefSeq" id="WP_000713057.1">
    <property type="nucleotide sequence ID" value="NC_003197.2"/>
</dbReference>
<dbReference type="SMR" id="P40822"/>
<dbReference type="STRING" id="99287.STM1164"/>
<dbReference type="PaxDb" id="99287-STM1164"/>
<dbReference type="GeneID" id="1252682"/>
<dbReference type="KEGG" id="stm:STM1164"/>
<dbReference type="PATRIC" id="fig|99287.12.peg.1232"/>
<dbReference type="HOGENOM" id="CLU_105009_0_0_6"/>
<dbReference type="OMA" id="HNDYQKQ"/>
<dbReference type="PhylomeDB" id="P40822"/>
<dbReference type="BioCyc" id="SENT99287:STM1164-MONOMER"/>
<dbReference type="Proteomes" id="UP000001014">
    <property type="component" value="Chromosome"/>
</dbReference>
<dbReference type="GO" id="GO:0005886">
    <property type="term" value="C:plasma membrane"/>
    <property type="evidence" value="ECO:0007669"/>
    <property type="project" value="UniProtKB-SubCell"/>
</dbReference>
<dbReference type="Gene3D" id="3.15.10.40">
    <property type="entry name" value="Uncharacterised protein PF07273, DUF1439"/>
    <property type="match status" value="1"/>
</dbReference>
<dbReference type="InterPro" id="IPR010835">
    <property type="entry name" value="DUF1439"/>
</dbReference>
<dbReference type="NCBIfam" id="NF007894">
    <property type="entry name" value="PRK10598.1"/>
    <property type="match status" value="1"/>
</dbReference>
<dbReference type="Pfam" id="PF07273">
    <property type="entry name" value="DUF1439"/>
    <property type="match status" value="1"/>
</dbReference>
<dbReference type="PROSITE" id="PS51257">
    <property type="entry name" value="PROKAR_LIPOPROTEIN"/>
    <property type="match status" value="1"/>
</dbReference>
<proteinExistence type="inferred from homology"/>
<gene>
    <name type="primary">yceB</name>
    <name type="ordered locus">STM1164</name>
</gene>
<name>YCEB_SALTY</name>
<keyword id="KW-1003">Cell membrane</keyword>
<keyword id="KW-0449">Lipoprotein</keyword>
<keyword id="KW-0472">Membrane</keyword>
<keyword id="KW-0564">Palmitate</keyword>
<keyword id="KW-1185">Reference proteome</keyword>
<keyword id="KW-0732">Signal</keyword>
<sequence length="186" mass="20620">MKKFFFAAALVVSGLLVGCNQLTQYTISEQEINQALEKRNNFSKDIGLPGIADAHIVLTNLVSQIGREEPNKVTLTGDARLDMNSLFGSQKATMKLKLKALPVFDKEKGAIYLQEMEVVDATVTPEKMQSVLQTLLPYLNQSLRSYFNQRPAYVLREDSSKGEALAKKLAKGIEVKPGEIVIPFTN</sequence>
<organism>
    <name type="scientific">Salmonella typhimurium (strain LT2 / SGSC1412 / ATCC 700720)</name>
    <dbReference type="NCBI Taxonomy" id="99287"/>
    <lineage>
        <taxon>Bacteria</taxon>
        <taxon>Pseudomonadati</taxon>
        <taxon>Pseudomonadota</taxon>
        <taxon>Gammaproteobacteria</taxon>
        <taxon>Enterobacterales</taxon>
        <taxon>Enterobacteriaceae</taxon>
        <taxon>Salmonella</taxon>
    </lineage>
</organism>
<feature type="signal peptide" evidence="1">
    <location>
        <begin position="1"/>
        <end position="18"/>
    </location>
</feature>
<feature type="chain" id="PRO_0000013823" description="Uncharacterized lipoprotein YceB">
    <location>
        <begin position="19"/>
        <end position="186"/>
    </location>
</feature>
<feature type="lipid moiety-binding region" description="N-palmitoyl cysteine" evidence="1">
    <location>
        <position position="19"/>
    </location>
</feature>
<feature type="lipid moiety-binding region" description="S-diacylglycerol cysteine" evidence="1">
    <location>
        <position position="19"/>
    </location>
</feature>
<comment type="subcellular location">
    <subcellularLocation>
        <location evidence="1">Cell membrane</location>
        <topology evidence="1">Lipid-anchor</topology>
    </subcellularLocation>
</comment>